<sequence length="190" mass="20902">MASFSTNEFKAGLKVMLDGNPCAILENEFVKPGKGQAFNRVKLRNLRSGKVLEQTFKSGDSLEAADVMDTEMNYLYNDGEFWHFMHPESFEQIQADKTAMSDSTKWLKENSNALCTITLFNGAPLSVTPPNFVELQITETDPGVRGDTSGGGGKPATLETGAVVRVPLFVQQGEVVRVDTRTGDYQTRVN</sequence>
<organism>
    <name type="scientific">Psychrobacter arcticus (strain DSM 17307 / VKM B-2377 / 273-4)</name>
    <dbReference type="NCBI Taxonomy" id="259536"/>
    <lineage>
        <taxon>Bacteria</taxon>
        <taxon>Pseudomonadati</taxon>
        <taxon>Pseudomonadota</taxon>
        <taxon>Gammaproteobacteria</taxon>
        <taxon>Moraxellales</taxon>
        <taxon>Moraxellaceae</taxon>
        <taxon>Psychrobacter</taxon>
    </lineage>
</organism>
<protein>
    <recommendedName>
        <fullName evidence="1">Elongation factor P</fullName>
        <shortName evidence="1">EF-P</shortName>
    </recommendedName>
</protein>
<gene>
    <name evidence="1" type="primary">efp</name>
    <name type="ordered locus">Psyc_1680</name>
</gene>
<dbReference type="EMBL" id="CP000082">
    <property type="protein sequence ID" value="AAZ19528.1"/>
    <property type="molecule type" value="Genomic_DNA"/>
</dbReference>
<dbReference type="RefSeq" id="WP_011280944.1">
    <property type="nucleotide sequence ID" value="NC_007204.1"/>
</dbReference>
<dbReference type="SMR" id="Q4FR30"/>
<dbReference type="STRING" id="259536.Psyc_1680"/>
<dbReference type="KEGG" id="par:Psyc_1680"/>
<dbReference type="eggNOG" id="COG0231">
    <property type="taxonomic scope" value="Bacteria"/>
</dbReference>
<dbReference type="HOGENOM" id="CLU_074944_0_0_6"/>
<dbReference type="OrthoDB" id="9801844at2"/>
<dbReference type="UniPathway" id="UPA00345"/>
<dbReference type="Proteomes" id="UP000000546">
    <property type="component" value="Chromosome"/>
</dbReference>
<dbReference type="GO" id="GO:0005737">
    <property type="term" value="C:cytoplasm"/>
    <property type="evidence" value="ECO:0007669"/>
    <property type="project" value="UniProtKB-SubCell"/>
</dbReference>
<dbReference type="GO" id="GO:0003746">
    <property type="term" value="F:translation elongation factor activity"/>
    <property type="evidence" value="ECO:0007669"/>
    <property type="project" value="UniProtKB-UniRule"/>
</dbReference>
<dbReference type="GO" id="GO:0043043">
    <property type="term" value="P:peptide biosynthetic process"/>
    <property type="evidence" value="ECO:0007669"/>
    <property type="project" value="InterPro"/>
</dbReference>
<dbReference type="CDD" id="cd04470">
    <property type="entry name" value="S1_EF-P_repeat_1"/>
    <property type="match status" value="1"/>
</dbReference>
<dbReference type="CDD" id="cd05794">
    <property type="entry name" value="S1_EF-P_repeat_2"/>
    <property type="match status" value="1"/>
</dbReference>
<dbReference type="FunFam" id="2.30.30.30:FF:000003">
    <property type="entry name" value="Elongation factor P"/>
    <property type="match status" value="1"/>
</dbReference>
<dbReference type="FunFam" id="2.40.50.140:FF:000004">
    <property type="entry name" value="Elongation factor P"/>
    <property type="match status" value="1"/>
</dbReference>
<dbReference type="FunFam" id="2.40.50.140:FF:000009">
    <property type="entry name" value="Elongation factor P"/>
    <property type="match status" value="1"/>
</dbReference>
<dbReference type="Gene3D" id="2.30.30.30">
    <property type="match status" value="1"/>
</dbReference>
<dbReference type="Gene3D" id="2.40.50.140">
    <property type="entry name" value="Nucleic acid-binding proteins"/>
    <property type="match status" value="2"/>
</dbReference>
<dbReference type="HAMAP" id="MF_00141">
    <property type="entry name" value="EF_P"/>
    <property type="match status" value="1"/>
</dbReference>
<dbReference type="InterPro" id="IPR015365">
    <property type="entry name" value="Elong-fact-P_C"/>
</dbReference>
<dbReference type="InterPro" id="IPR012340">
    <property type="entry name" value="NA-bd_OB-fold"/>
</dbReference>
<dbReference type="InterPro" id="IPR014722">
    <property type="entry name" value="Rib_uL2_dom2"/>
</dbReference>
<dbReference type="InterPro" id="IPR020599">
    <property type="entry name" value="Transl_elong_fac_P/YeiP"/>
</dbReference>
<dbReference type="InterPro" id="IPR013185">
    <property type="entry name" value="Transl_elong_KOW-like"/>
</dbReference>
<dbReference type="InterPro" id="IPR001059">
    <property type="entry name" value="Transl_elong_P/YeiP_cen"/>
</dbReference>
<dbReference type="InterPro" id="IPR013852">
    <property type="entry name" value="Transl_elong_P/YeiP_CS"/>
</dbReference>
<dbReference type="InterPro" id="IPR011768">
    <property type="entry name" value="Transl_elongation_fac_P"/>
</dbReference>
<dbReference type="InterPro" id="IPR008991">
    <property type="entry name" value="Translation_prot_SH3-like_sf"/>
</dbReference>
<dbReference type="NCBIfam" id="TIGR00038">
    <property type="entry name" value="efp"/>
    <property type="match status" value="1"/>
</dbReference>
<dbReference type="NCBIfam" id="NF001810">
    <property type="entry name" value="PRK00529.1"/>
    <property type="match status" value="1"/>
</dbReference>
<dbReference type="PANTHER" id="PTHR30053">
    <property type="entry name" value="ELONGATION FACTOR P"/>
    <property type="match status" value="1"/>
</dbReference>
<dbReference type="PANTHER" id="PTHR30053:SF12">
    <property type="entry name" value="ELONGATION FACTOR P (EF-P) FAMILY PROTEIN"/>
    <property type="match status" value="1"/>
</dbReference>
<dbReference type="Pfam" id="PF01132">
    <property type="entry name" value="EFP"/>
    <property type="match status" value="1"/>
</dbReference>
<dbReference type="Pfam" id="PF08207">
    <property type="entry name" value="EFP_N"/>
    <property type="match status" value="1"/>
</dbReference>
<dbReference type="Pfam" id="PF09285">
    <property type="entry name" value="Elong-fact-P_C"/>
    <property type="match status" value="1"/>
</dbReference>
<dbReference type="PIRSF" id="PIRSF005901">
    <property type="entry name" value="EF-P"/>
    <property type="match status" value="1"/>
</dbReference>
<dbReference type="SMART" id="SM01185">
    <property type="entry name" value="EFP"/>
    <property type="match status" value="1"/>
</dbReference>
<dbReference type="SMART" id="SM00841">
    <property type="entry name" value="Elong-fact-P_C"/>
    <property type="match status" value="1"/>
</dbReference>
<dbReference type="SUPFAM" id="SSF50249">
    <property type="entry name" value="Nucleic acid-binding proteins"/>
    <property type="match status" value="2"/>
</dbReference>
<dbReference type="SUPFAM" id="SSF50104">
    <property type="entry name" value="Translation proteins SH3-like domain"/>
    <property type="match status" value="1"/>
</dbReference>
<dbReference type="PROSITE" id="PS01275">
    <property type="entry name" value="EFP"/>
    <property type="match status" value="1"/>
</dbReference>
<name>EFP_PSYA2</name>
<reference key="1">
    <citation type="journal article" date="2010" name="Appl. Environ. Microbiol.">
        <title>The genome sequence of Psychrobacter arcticus 273-4, a psychroactive Siberian permafrost bacterium, reveals mechanisms for adaptation to low-temperature growth.</title>
        <authorList>
            <person name="Ayala-del-Rio H.L."/>
            <person name="Chain P.S."/>
            <person name="Grzymski J.J."/>
            <person name="Ponder M.A."/>
            <person name="Ivanova N."/>
            <person name="Bergholz P.W."/>
            <person name="Di Bartolo G."/>
            <person name="Hauser L."/>
            <person name="Land M."/>
            <person name="Bakermans C."/>
            <person name="Rodrigues D."/>
            <person name="Klappenbach J."/>
            <person name="Zarka D."/>
            <person name="Larimer F."/>
            <person name="Richardson P."/>
            <person name="Murray A."/>
            <person name="Thomashow M."/>
            <person name="Tiedje J.M."/>
        </authorList>
    </citation>
    <scope>NUCLEOTIDE SEQUENCE [LARGE SCALE GENOMIC DNA]</scope>
    <source>
        <strain>DSM 17307 / VKM B-2377 / 273-4</strain>
    </source>
</reference>
<accession>Q4FR30</accession>
<comment type="function">
    <text evidence="1">Involved in peptide bond synthesis. Alleviates ribosome stalling that occurs when 3 or more consecutive Pro residues or the sequence PPG is present in a protein, possibly by augmenting the peptidyl transferase activity of the ribosome. Modification of Lys-34 is required for alleviation.</text>
</comment>
<comment type="pathway">
    <text evidence="1">Protein biosynthesis; polypeptide chain elongation.</text>
</comment>
<comment type="subcellular location">
    <subcellularLocation>
        <location evidence="1">Cytoplasm</location>
    </subcellularLocation>
</comment>
<comment type="PTM">
    <text evidence="1">May be beta-lysylated on the epsilon-amino group of Lys-34 by the combined action of EpmA and EpmB, and then hydroxylated on the C5 position of the same residue by EpmC (if this protein is present). Lysylation is critical for the stimulatory effect of EF-P on peptide-bond formation. The lysylation moiety may extend toward the peptidyltransferase center and stabilize the terminal 3-CCA end of the tRNA. Hydroxylation of the C5 position on Lys-34 may allow additional potential stabilizing hydrogen-bond interactions with the P-tRNA.</text>
</comment>
<comment type="similarity">
    <text evidence="1">Belongs to the elongation factor P family.</text>
</comment>
<feature type="chain" id="PRO_1000010821" description="Elongation factor P">
    <location>
        <begin position="1"/>
        <end position="190"/>
    </location>
</feature>
<feature type="modified residue" description="N6-(3,6-diaminohexanoyl)-5-hydroxylysine" evidence="1">
    <location>
        <position position="34"/>
    </location>
</feature>
<keyword id="KW-0963">Cytoplasm</keyword>
<keyword id="KW-0251">Elongation factor</keyword>
<keyword id="KW-0379">Hydroxylation</keyword>
<keyword id="KW-0648">Protein biosynthesis</keyword>
<keyword id="KW-1185">Reference proteome</keyword>
<evidence type="ECO:0000255" key="1">
    <source>
        <dbReference type="HAMAP-Rule" id="MF_00141"/>
    </source>
</evidence>
<proteinExistence type="inferred from homology"/>